<feature type="chain" id="PRO_1000123860" description="ATP-dependent Clp protease ATP-binding subunit ClpX">
    <location>
        <begin position="1"/>
        <end position="426"/>
    </location>
</feature>
<feature type="domain" description="ClpX-type ZB" evidence="2">
    <location>
        <begin position="4"/>
        <end position="57"/>
    </location>
</feature>
<feature type="binding site" evidence="2">
    <location>
        <position position="16"/>
    </location>
    <ligand>
        <name>Zn(2+)</name>
        <dbReference type="ChEBI" id="CHEBI:29105"/>
    </ligand>
</feature>
<feature type="binding site" evidence="2">
    <location>
        <position position="19"/>
    </location>
    <ligand>
        <name>Zn(2+)</name>
        <dbReference type="ChEBI" id="CHEBI:29105"/>
    </ligand>
</feature>
<feature type="binding site" evidence="2">
    <location>
        <position position="38"/>
    </location>
    <ligand>
        <name>Zn(2+)</name>
        <dbReference type="ChEBI" id="CHEBI:29105"/>
    </ligand>
</feature>
<feature type="binding site" evidence="2">
    <location>
        <position position="41"/>
    </location>
    <ligand>
        <name>Zn(2+)</name>
        <dbReference type="ChEBI" id="CHEBI:29105"/>
    </ligand>
</feature>
<feature type="binding site" evidence="1">
    <location>
        <begin position="122"/>
        <end position="129"/>
    </location>
    <ligand>
        <name>ATP</name>
        <dbReference type="ChEBI" id="CHEBI:30616"/>
    </ligand>
</feature>
<sequence length="426" mass="46811">MTDKSKEGGSGKLLYCSFCGKSQHEVRKLIAGPSVYICDECVDLCNDIIREEIKDVLPKKESESLPTPREIREHLDDYVIGQEYAKKVLAVAVYNHYKRLRNGDTTAEGVELGKSNILLIGPTGSGKTLLAETLARFLDVPFTMADATTLTEAGYVGEDVENIIQKLLQKCDYDVAKAERGIVYIDEIDKISRKAENPSITRDVSGEGVQQALLKLVEGTVASVPPQGGRKHPQQEFLQVDTSKILFICGGAFAGLDKVIEQRVETGSGIGFGAEVRSKDETKTIGELFTQVEPEDLVKYGLIPEFIGRLPVTTTLTELDEEALIQILCEPKNALTKQYAALFELEDTELEFREDALRAIAKKAMNRKTGARGLRSILEGVLLETMYELPSSTDVSKVVIDESVINGESEPLLIYSNSDNQAAVAE</sequence>
<comment type="function">
    <text evidence="1">ATP-dependent specificity component of the Clp protease. It directs the protease to specific substrates. Can perform chaperone functions in the absence of ClpP.</text>
</comment>
<comment type="subunit">
    <text evidence="1">Component of the ClpX-ClpP complex. Forms a hexameric ring that, in the presence of ATP, binds to fourteen ClpP subunits assembled into a disk-like structure with a central cavity, resembling the structure of eukaryotic proteasomes.</text>
</comment>
<comment type="similarity">
    <text evidence="1">Belongs to the ClpX chaperone family.</text>
</comment>
<evidence type="ECO:0000255" key="1">
    <source>
        <dbReference type="HAMAP-Rule" id="MF_00175"/>
    </source>
</evidence>
<evidence type="ECO:0000255" key="2">
    <source>
        <dbReference type="PROSITE-ProRule" id="PRU01250"/>
    </source>
</evidence>
<keyword id="KW-0067">ATP-binding</keyword>
<keyword id="KW-0143">Chaperone</keyword>
<keyword id="KW-0479">Metal-binding</keyword>
<keyword id="KW-0547">Nucleotide-binding</keyword>
<keyword id="KW-0862">Zinc</keyword>
<organism>
    <name type="scientific">Vibrio atlanticus (strain LGP32)</name>
    <name type="common">Vibrio splendidus (strain Mel32)</name>
    <dbReference type="NCBI Taxonomy" id="575788"/>
    <lineage>
        <taxon>Bacteria</taxon>
        <taxon>Pseudomonadati</taxon>
        <taxon>Pseudomonadota</taxon>
        <taxon>Gammaproteobacteria</taxon>
        <taxon>Vibrionales</taxon>
        <taxon>Vibrionaceae</taxon>
        <taxon>Vibrio</taxon>
    </lineage>
</organism>
<gene>
    <name evidence="1" type="primary">clpX</name>
    <name type="ordered locus">VS_2204</name>
</gene>
<reference key="1">
    <citation type="submission" date="2009-02" db="EMBL/GenBank/DDBJ databases">
        <title>Vibrio splendidus str. LGP32 complete genome.</title>
        <authorList>
            <person name="Mazel D."/>
            <person name="Le Roux F."/>
        </authorList>
    </citation>
    <scope>NUCLEOTIDE SEQUENCE [LARGE SCALE GENOMIC DNA]</scope>
    <source>
        <strain>LGP32</strain>
    </source>
</reference>
<protein>
    <recommendedName>
        <fullName evidence="1">ATP-dependent Clp protease ATP-binding subunit ClpX</fullName>
    </recommendedName>
</protein>
<name>CLPX_VIBA3</name>
<accession>B7VHZ9</accession>
<dbReference type="EMBL" id="FM954972">
    <property type="protein sequence ID" value="CAV19369.1"/>
    <property type="molecule type" value="Genomic_DNA"/>
</dbReference>
<dbReference type="SMR" id="B7VHZ9"/>
<dbReference type="STRING" id="575788.VS_2204"/>
<dbReference type="KEGG" id="vsp:VS_2204"/>
<dbReference type="eggNOG" id="COG1219">
    <property type="taxonomic scope" value="Bacteria"/>
</dbReference>
<dbReference type="HOGENOM" id="CLU_014218_8_2_6"/>
<dbReference type="Proteomes" id="UP000009100">
    <property type="component" value="Chromosome 1"/>
</dbReference>
<dbReference type="GO" id="GO:0009376">
    <property type="term" value="C:HslUV protease complex"/>
    <property type="evidence" value="ECO:0007669"/>
    <property type="project" value="TreeGrafter"/>
</dbReference>
<dbReference type="GO" id="GO:0005524">
    <property type="term" value="F:ATP binding"/>
    <property type="evidence" value="ECO:0007669"/>
    <property type="project" value="UniProtKB-UniRule"/>
</dbReference>
<dbReference type="GO" id="GO:0016887">
    <property type="term" value="F:ATP hydrolysis activity"/>
    <property type="evidence" value="ECO:0007669"/>
    <property type="project" value="InterPro"/>
</dbReference>
<dbReference type="GO" id="GO:0140662">
    <property type="term" value="F:ATP-dependent protein folding chaperone"/>
    <property type="evidence" value="ECO:0007669"/>
    <property type="project" value="InterPro"/>
</dbReference>
<dbReference type="GO" id="GO:0046983">
    <property type="term" value="F:protein dimerization activity"/>
    <property type="evidence" value="ECO:0007669"/>
    <property type="project" value="InterPro"/>
</dbReference>
<dbReference type="GO" id="GO:0051082">
    <property type="term" value="F:unfolded protein binding"/>
    <property type="evidence" value="ECO:0007669"/>
    <property type="project" value="UniProtKB-UniRule"/>
</dbReference>
<dbReference type="GO" id="GO:0008270">
    <property type="term" value="F:zinc ion binding"/>
    <property type="evidence" value="ECO:0007669"/>
    <property type="project" value="InterPro"/>
</dbReference>
<dbReference type="GO" id="GO:0051301">
    <property type="term" value="P:cell division"/>
    <property type="evidence" value="ECO:0007669"/>
    <property type="project" value="TreeGrafter"/>
</dbReference>
<dbReference type="GO" id="GO:0051603">
    <property type="term" value="P:proteolysis involved in protein catabolic process"/>
    <property type="evidence" value="ECO:0007669"/>
    <property type="project" value="TreeGrafter"/>
</dbReference>
<dbReference type="CDD" id="cd19497">
    <property type="entry name" value="RecA-like_ClpX"/>
    <property type="match status" value="1"/>
</dbReference>
<dbReference type="FunFam" id="1.10.8.60:FF:000002">
    <property type="entry name" value="ATP-dependent Clp protease ATP-binding subunit ClpX"/>
    <property type="match status" value="1"/>
</dbReference>
<dbReference type="FunFam" id="3.40.50.300:FF:000005">
    <property type="entry name" value="ATP-dependent Clp protease ATP-binding subunit ClpX"/>
    <property type="match status" value="1"/>
</dbReference>
<dbReference type="Gene3D" id="1.10.8.60">
    <property type="match status" value="1"/>
</dbReference>
<dbReference type="Gene3D" id="6.20.220.10">
    <property type="entry name" value="ClpX chaperone, C4-type zinc finger domain"/>
    <property type="match status" value="1"/>
</dbReference>
<dbReference type="Gene3D" id="3.40.50.300">
    <property type="entry name" value="P-loop containing nucleotide triphosphate hydrolases"/>
    <property type="match status" value="1"/>
</dbReference>
<dbReference type="HAMAP" id="MF_00175">
    <property type="entry name" value="ClpX"/>
    <property type="match status" value="1"/>
</dbReference>
<dbReference type="InterPro" id="IPR003593">
    <property type="entry name" value="AAA+_ATPase"/>
</dbReference>
<dbReference type="InterPro" id="IPR050052">
    <property type="entry name" value="ATP-dep_Clp_protease_ClpX"/>
</dbReference>
<dbReference type="InterPro" id="IPR003959">
    <property type="entry name" value="ATPase_AAA_core"/>
</dbReference>
<dbReference type="InterPro" id="IPR019489">
    <property type="entry name" value="Clp_ATPase_C"/>
</dbReference>
<dbReference type="InterPro" id="IPR004487">
    <property type="entry name" value="Clp_protease_ATP-bd_su_ClpX"/>
</dbReference>
<dbReference type="InterPro" id="IPR046425">
    <property type="entry name" value="ClpX_bact"/>
</dbReference>
<dbReference type="InterPro" id="IPR027417">
    <property type="entry name" value="P-loop_NTPase"/>
</dbReference>
<dbReference type="InterPro" id="IPR010603">
    <property type="entry name" value="Znf_CppX_C4"/>
</dbReference>
<dbReference type="InterPro" id="IPR038366">
    <property type="entry name" value="Znf_CppX_C4_sf"/>
</dbReference>
<dbReference type="NCBIfam" id="TIGR00382">
    <property type="entry name" value="clpX"/>
    <property type="match status" value="1"/>
</dbReference>
<dbReference type="NCBIfam" id="NF003745">
    <property type="entry name" value="PRK05342.1"/>
    <property type="match status" value="1"/>
</dbReference>
<dbReference type="PANTHER" id="PTHR48102:SF7">
    <property type="entry name" value="ATP-DEPENDENT CLP PROTEASE ATP-BINDING SUBUNIT CLPX-LIKE, MITOCHONDRIAL"/>
    <property type="match status" value="1"/>
</dbReference>
<dbReference type="PANTHER" id="PTHR48102">
    <property type="entry name" value="ATP-DEPENDENT CLP PROTEASE ATP-BINDING SUBUNIT CLPX-LIKE, MITOCHONDRIAL-RELATED"/>
    <property type="match status" value="1"/>
</dbReference>
<dbReference type="Pfam" id="PF07724">
    <property type="entry name" value="AAA_2"/>
    <property type="match status" value="1"/>
</dbReference>
<dbReference type="Pfam" id="PF10431">
    <property type="entry name" value="ClpB_D2-small"/>
    <property type="match status" value="1"/>
</dbReference>
<dbReference type="Pfam" id="PF06689">
    <property type="entry name" value="zf-C4_ClpX"/>
    <property type="match status" value="1"/>
</dbReference>
<dbReference type="SMART" id="SM00382">
    <property type="entry name" value="AAA"/>
    <property type="match status" value="1"/>
</dbReference>
<dbReference type="SMART" id="SM01086">
    <property type="entry name" value="ClpB_D2-small"/>
    <property type="match status" value="1"/>
</dbReference>
<dbReference type="SMART" id="SM00994">
    <property type="entry name" value="zf-C4_ClpX"/>
    <property type="match status" value="1"/>
</dbReference>
<dbReference type="SUPFAM" id="SSF57716">
    <property type="entry name" value="Glucocorticoid receptor-like (DNA-binding domain)"/>
    <property type="match status" value="1"/>
</dbReference>
<dbReference type="SUPFAM" id="SSF52540">
    <property type="entry name" value="P-loop containing nucleoside triphosphate hydrolases"/>
    <property type="match status" value="1"/>
</dbReference>
<dbReference type="PROSITE" id="PS51902">
    <property type="entry name" value="CLPX_ZB"/>
    <property type="match status" value="1"/>
</dbReference>
<proteinExistence type="inferred from homology"/>